<protein>
    <recommendedName>
        <fullName evidence="2">Uncharacterized protein At1g65710</fullName>
    </recommendedName>
</protein>
<accession>Q5XVH5</accession>
<accession>Q9SHY4</accession>
<reference key="1">
    <citation type="journal article" date="2000" name="Nature">
        <title>Sequence and analysis of chromosome 1 of the plant Arabidopsis thaliana.</title>
        <authorList>
            <person name="Theologis A."/>
            <person name="Ecker J.R."/>
            <person name="Palm C.J."/>
            <person name="Federspiel N.A."/>
            <person name="Kaul S."/>
            <person name="White O."/>
            <person name="Alonso J."/>
            <person name="Altafi H."/>
            <person name="Araujo R."/>
            <person name="Bowman C.L."/>
            <person name="Brooks S.Y."/>
            <person name="Buehler E."/>
            <person name="Chan A."/>
            <person name="Chao Q."/>
            <person name="Chen H."/>
            <person name="Cheuk R.F."/>
            <person name="Chin C.W."/>
            <person name="Chung M.K."/>
            <person name="Conn L."/>
            <person name="Conway A.B."/>
            <person name="Conway A.R."/>
            <person name="Creasy T.H."/>
            <person name="Dewar K."/>
            <person name="Dunn P."/>
            <person name="Etgu P."/>
            <person name="Feldblyum T.V."/>
            <person name="Feng J.-D."/>
            <person name="Fong B."/>
            <person name="Fujii C.Y."/>
            <person name="Gill J.E."/>
            <person name="Goldsmith A.D."/>
            <person name="Haas B."/>
            <person name="Hansen N.F."/>
            <person name="Hughes B."/>
            <person name="Huizar L."/>
            <person name="Hunter J.L."/>
            <person name="Jenkins J."/>
            <person name="Johnson-Hopson C."/>
            <person name="Khan S."/>
            <person name="Khaykin E."/>
            <person name="Kim C.J."/>
            <person name="Koo H.L."/>
            <person name="Kremenetskaia I."/>
            <person name="Kurtz D.B."/>
            <person name="Kwan A."/>
            <person name="Lam B."/>
            <person name="Langin-Hooper S."/>
            <person name="Lee A."/>
            <person name="Lee J.M."/>
            <person name="Lenz C.A."/>
            <person name="Li J.H."/>
            <person name="Li Y.-P."/>
            <person name="Lin X."/>
            <person name="Liu S.X."/>
            <person name="Liu Z.A."/>
            <person name="Luros J.S."/>
            <person name="Maiti R."/>
            <person name="Marziali A."/>
            <person name="Militscher J."/>
            <person name="Miranda M."/>
            <person name="Nguyen M."/>
            <person name="Nierman W.C."/>
            <person name="Osborne B.I."/>
            <person name="Pai G."/>
            <person name="Peterson J."/>
            <person name="Pham P.K."/>
            <person name="Rizzo M."/>
            <person name="Rooney T."/>
            <person name="Rowley D."/>
            <person name="Sakano H."/>
            <person name="Salzberg S.L."/>
            <person name="Schwartz J.R."/>
            <person name="Shinn P."/>
            <person name="Southwick A.M."/>
            <person name="Sun H."/>
            <person name="Tallon L.J."/>
            <person name="Tambunga G."/>
            <person name="Toriumi M.J."/>
            <person name="Town C.D."/>
            <person name="Utterback T."/>
            <person name="Van Aken S."/>
            <person name="Vaysberg M."/>
            <person name="Vysotskaia V.S."/>
            <person name="Walker M."/>
            <person name="Wu D."/>
            <person name="Yu G."/>
            <person name="Fraser C.M."/>
            <person name="Venter J.C."/>
            <person name="Davis R.W."/>
        </authorList>
    </citation>
    <scope>NUCLEOTIDE SEQUENCE [LARGE SCALE GENOMIC DNA]</scope>
    <source>
        <strain>cv. Columbia</strain>
    </source>
</reference>
<reference key="2">
    <citation type="journal article" date="2017" name="Plant J.">
        <title>Araport11: a complete reannotation of the Arabidopsis thaliana reference genome.</title>
        <authorList>
            <person name="Cheng C.Y."/>
            <person name="Krishnakumar V."/>
            <person name="Chan A.P."/>
            <person name="Thibaud-Nissen F."/>
            <person name="Schobel S."/>
            <person name="Town C.D."/>
        </authorList>
    </citation>
    <scope>GENOME REANNOTATION</scope>
    <source>
        <strain>cv. Columbia</strain>
    </source>
</reference>
<reference key="3">
    <citation type="journal article" date="2006" name="Plant Biotechnol. J.">
        <title>Simultaneous high-throughput recombinational cloning of open reading frames in closed and open configurations.</title>
        <authorList>
            <person name="Underwood B.A."/>
            <person name="Vanderhaeghen R."/>
            <person name="Whitford R."/>
            <person name="Town C.D."/>
            <person name="Hilson P."/>
        </authorList>
    </citation>
    <scope>NUCLEOTIDE SEQUENCE [LARGE SCALE MRNA]</scope>
    <source>
        <strain>cv. Columbia</strain>
    </source>
</reference>
<reference key="4">
    <citation type="submission" date="2004-08" db="EMBL/GenBank/DDBJ databases">
        <title>Reconstruction of cDNA sequences for hypothetical genes in Arabidopsis thaliana from 5' and 3' RACE products.</title>
        <authorList>
            <person name="Xiao Y.-L."/>
            <person name="Underwood B.A."/>
            <person name="Moskal W.A. Jr."/>
            <person name="Wang W."/>
            <person name="Redman J.C."/>
            <person name="Wu H.C."/>
            <person name="Utterback T."/>
            <person name="Town C.D."/>
        </authorList>
    </citation>
    <scope>NUCLEOTIDE SEQUENCE [LARGE SCALE MRNA]</scope>
    <source>
        <strain>cv. Columbia</strain>
    </source>
</reference>
<dbReference type="EMBL" id="AC007234">
    <property type="protein sequence ID" value="AAF23841.1"/>
    <property type="status" value="ALT_SEQ"/>
    <property type="molecule type" value="Genomic_DNA"/>
</dbReference>
<dbReference type="EMBL" id="CP002684">
    <property type="protein sequence ID" value="AEE34416.1"/>
    <property type="molecule type" value="Genomic_DNA"/>
</dbReference>
<dbReference type="EMBL" id="DQ459173">
    <property type="protein sequence ID" value="ABE97172.1"/>
    <property type="molecule type" value="Genomic_DNA"/>
</dbReference>
<dbReference type="EMBL" id="AY735547">
    <property type="protein sequence ID" value="AAU44417.1"/>
    <property type="molecule type" value="mRNA"/>
</dbReference>
<dbReference type="PIR" id="G96681">
    <property type="entry name" value="G96681"/>
</dbReference>
<dbReference type="RefSeq" id="NP_176748.1">
    <property type="nucleotide sequence ID" value="NM_105245.3"/>
</dbReference>
<dbReference type="FunCoup" id="Q5XVH5">
    <property type="interactions" value="94"/>
</dbReference>
<dbReference type="iPTMnet" id="Q5XVH5"/>
<dbReference type="PaxDb" id="3702-AT1G65710.1"/>
<dbReference type="ProteomicsDB" id="243090"/>
<dbReference type="EnsemblPlants" id="AT1G65710.1">
    <property type="protein sequence ID" value="AT1G65710.1"/>
    <property type="gene ID" value="AT1G65710"/>
</dbReference>
<dbReference type="GeneID" id="842882"/>
<dbReference type="Gramene" id="AT1G65710.1">
    <property type="protein sequence ID" value="AT1G65710.1"/>
    <property type="gene ID" value="AT1G65710"/>
</dbReference>
<dbReference type="KEGG" id="ath:AT1G65710"/>
<dbReference type="Araport" id="AT1G65710"/>
<dbReference type="TAIR" id="AT1G65710"/>
<dbReference type="eggNOG" id="ENOG502QUM1">
    <property type="taxonomic scope" value="Eukaryota"/>
</dbReference>
<dbReference type="HOGENOM" id="CLU_028999_0_0_1"/>
<dbReference type="InParanoid" id="Q5XVH5"/>
<dbReference type="OMA" id="CCSLEEQ"/>
<dbReference type="PhylomeDB" id="Q5XVH5"/>
<dbReference type="PRO" id="PR:Q5XVH5"/>
<dbReference type="Proteomes" id="UP000006548">
    <property type="component" value="Chromosome 1"/>
</dbReference>
<dbReference type="ExpressionAtlas" id="Q5XVH5">
    <property type="expression patterns" value="baseline and differential"/>
</dbReference>
<dbReference type="InterPro" id="IPR040412">
    <property type="entry name" value="At1g65710-like"/>
</dbReference>
<dbReference type="PANTHER" id="PTHR34367">
    <property type="entry name" value="OS02G0734667 PROTEIN"/>
    <property type="match status" value="1"/>
</dbReference>
<dbReference type="PANTHER" id="PTHR34367:SF1">
    <property type="entry name" value="OS04G0528600 PROTEIN"/>
    <property type="match status" value="1"/>
</dbReference>
<gene>
    <name evidence="3" type="ordered locus">At1g65710</name>
    <name evidence="4" type="ORF">F1E22.8</name>
</gene>
<keyword id="KW-1185">Reference proteome</keyword>
<sequence>MGCCLSKKPSPSLPSSVKPSDPIKPMEPVIEPLEEEAKPKSEKLNQEEEEEEVVVIKHTRSHEERSKKTESDKDSPVSSPVAAEKSNSTPLVRISSCTKEEVDAILIQCGKLSRSNSAAKTRRYSGSKRSFDFDQNERIRGGDAAEEDGMQRNRHRGVERVHGSPRERRRRTPSRERERSGSRERGNVGGGGGGSRRVSRSPAKRSEIRNADSCGSSVNSSNNRPGKFVTIPATDKSNNVEPLVKRITVKRNIGDACRIAASPRSKSPARAGNNVPSLSRSNSRKAEQSPYRRNPLGEIDQNTKKMIESVKPNSRTSRGPSPSRVAVVELTKAPQVVLSRSRSLRKSRDFDLVSNEDNNYTALLLKDIQSFHGKSVDDSVISLPLCVSKACSIVEAVADLNSMTNRTCLRSDSSRFRFTSTVKKADLMEPSFEKYVTVKRGGGSLEESSGSNNVT</sequence>
<organism>
    <name type="scientific">Arabidopsis thaliana</name>
    <name type="common">Mouse-ear cress</name>
    <dbReference type="NCBI Taxonomy" id="3702"/>
    <lineage>
        <taxon>Eukaryota</taxon>
        <taxon>Viridiplantae</taxon>
        <taxon>Streptophyta</taxon>
        <taxon>Embryophyta</taxon>
        <taxon>Tracheophyta</taxon>
        <taxon>Spermatophyta</taxon>
        <taxon>Magnoliopsida</taxon>
        <taxon>eudicotyledons</taxon>
        <taxon>Gunneridae</taxon>
        <taxon>Pentapetalae</taxon>
        <taxon>rosids</taxon>
        <taxon>malvids</taxon>
        <taxon>Brassicales</taxon>
        <taxon>Brassicaceae</taxon>
        <taxon>Camelineae</taxon>
        <taxon>Arabidopsis</taxon>
    </lineage>
</organism>
<evidence type="ECO:0000256" key="1">
    <source>
        <dbReference type="SAM" id="MobiDB-lite"/>
    </source>
</evidence>
<evidence type="ECO:0000305" key="2"/>
<evidence type="ECO:0000312" key="3">
    <source>
        <dbReference type="Araport" id="AT1G65710"/>
    </source>
</evidence>
<evidence type="ECO:0000312" key="4">
    <source>
        <dbReference type="EMBL" id="AAF23841.1"/>
    </source>
</evidence>
<proteinExistence type="evidence at transcript level"/>
<feature type="chain" id="PRO_0000431652" description="Uncharacterized protein At1g65710">
    <location>
        <begin position="1"/>
        <end position="455"/>
    </location>
</feature>
<feature type="region of interest" description="Disordered" evidence="1">
    <location>
        <begin position="1"/>
        <end position="234"/>
    </location>
</feature>
<feature type="region of interest" description="Disordered" evidence="1">
    <location>
        <begin position="258"/>
        <end position="304"/>
    </location>
</feature>
<feature type="compositionally biased region" description="Low complexity" evidence="1">
    <location>
        <begin position="1"/>
        <end position="20"/>
    </location>
</feature>
<feature type="compositionally biased region" description="Basic and acidic residues" evidence="1">
    <location>
        <begin position="35"/>
        <end position="46"/>
    </location>
</feature>
<feature type="compositionally biased region" description="Basic and acidic residues" evidence="1">
    <location>
        <begin position="61"/>
        <end position="75"/>
    </location>
</feature>
<feature type="compositionally biased region" description="Basic and acidic residues" evidence="1">
    <location>
        <begin position="129"/>
        <end position="143"/>
    </location>
</feature>
<feature type="compositionally biased region" description="Basic and acidic residues" evidence="1">
    <location>
        <begin position="156"/>
        <end position="166"/>
    </location>
</feature>
<feature type="compositionally biased region" description="Basic and acidic residues" evidence="1">
    <location>
        <begin position="173"/>
        <end position="186"/>
    </location>
</feature>
<feature type="compositionally biased region" description="Polar residues" evidence="1">
    <location>
        <begin position="213"/>
        <end position="224"/>
    </location>
</feature>
<feature type="compositionally biased region" description="Low complexity" evidence="1">
    <location>
        <begin position="260"/>
        <end position="271"/>
    </location>
</feature>
<comment type="sequence caution" evidence="2">
    <conflict type="erroneous gene model prediction">
        <sequence resource="EMBL-CDS" id="AAF23841"/>
    </conflict>
    <text>The predicted gene has been split into 2 genes: At1g65700 and At1g65710.</text>
</comment>
<name>Y1710_ARATH</name>